<accession>O78776</accession>
<dbReference type="EMBL" id="AF034725">
    <property type="protein sequence ID" value="AAC31680.1"/>
    <property type="molecule type" value="Genomic_DNA"/>
</dbReference>
<dbReference type="GO" id="GO:0005743">
    <property type="term" value="C:mitochondrial inner membrane"/>
    <property type="evidence" value="ECO:0007669"/>
    <property type="project" value="UniProtKB-SubCell"/>
</dbReference>
<dbReference type="GO" id="GO:0045275">
    <property type="term" value="C:respiratory chain complex III"/>
    <property type="evidence" value="ECO:0007669"/>
    <property type="project" value="InterPro"/>
</dbReference>
<dbReference type="GO" id="GO:0046872">
    <property type="term" value="F:metal ion binding"/>
    <property type="evidence" value="ECO:0007669"/>
    <property type="project" value="UniProtKB-KW"/>
</dbReference>
<dbReference type="GO" id="GO:0008121">
    <property type="term" value="F:ubiquinol-cytochrome-c reductase activity"/>
    <property type="evidence" value="ECO:0007669"/>
    <property type="project" value="InterPro"/>
</dbReference>
<dbReference type="GO" id="GO:0006122">
    <property type="term" value="P:mitochondrial electron transport, ubiquinol to cytochrome c"/>
    <property type="evidence" value="ECO:0007669"/>
    <property type="project" value="TreeGrafter"/>
</dbReference>
<dbReference type="CDD" id="cd00290">
    <property type="entry name" value="cytochrome_b_C"/>
    <property type="match status" value="1"/>
</dbReference>
<dbReference type="CDD" id="cd00284">
    <property type="entry name" value="Cytochrome_b_N"/>
    <property type="match status" value="1"/>
</dbReference>
<dbReference type="FunFam" id="1.20.810.10:FF:000002">
    <property type="entry name" value="Cytochrome b"/>
    <property type="match status" value="1"/>
</dbReference>
<dbReference type="Gene3D" id="1.20.810.10">
    <property type="entry name" value="Cytochrome Bc1 Complex, Chain C"/>
    <property type="match status" value="1"/>
</dbReference>
<dbReference type="InterPro" id="IPR005798">
    <property type="entry name" value="Cyt_b/b6_C"/>
</dbReference>
<dbReference type="InterPro" id="IPR036150">
    <property type="entry name" value="Cyt_b/b6_C_sf"/>
</dbReference>
<dbReference type="InterPro" id="IPR005797">
    <property type="entry name" value="Cyt_b/b6_N"/>
</dbReference>
<dbReference type="InterPro" id="IPR027387">
    <property type="entry name" value="Cytb/b6-like_sf"/>
</dbReference>
<dbReference type="InterPro" id="IPR030689">
    <property type="entry name" value="Cytochrome_b"/>
</dbReference>
<dbReference type="InterPro" id="IPR048260">
    <property type="entry name" value="Cytochrome_b_C_euk/bac"/>
</dbReference>
<dbReference type="InterPro" id="IPR048259">
    <property type="entry name" value="Cytochrome_b_N_euk/bac"/>
</dbReference>
<dbReference type="InterPro" id="IPR016174">
    <property type="entry name" value="Di-haem_cyt_TM"/>
</dbReference>
<dbReference type="PANTHER" id="PTHR19271">
    <property type="entry name" value="CYTOCHROME B"/>
    <property type="match status" value="1"/>
</dbReference>
<dbReference type="PANTHER" id="PTHR19271:SF16">
    <property type="entry name" value="CYTOCHROME B"/>
    <property type="match status" value="1"/>
</dbReference>
<dbReference type="Pfam" id="PF00032">
    <property type="entry name" value="Cytochrom_B_C"/>
    <property type="match status" value="1"/>
</dbReference>
<dbReference type="Pfam" id="PF00033">
    <property type="entry name" value="Cytochrome_B"/>
    <property type="match status" value="1"/>
</dbReference>
<dbReference type="PIRSF" id="PIRSF038885">
    <property type="entry name" value="COB"/>
    <property type="match status" value="1"/>
</dbReference>
<dbReference type="SUPFAM" id="SSF81648">
    <property type="entry name" value="a domain/subunit of cytochrome bc1 complex (Ubiquinol-cytochrome c reductase)"/>
    <property type="match status" value="1"/>
</dbReference>
<dbReference type="SUPFAM" id="SSF81342">
    <property type="entry name" value="Transmembrane di-heme cytochromes"/>
    <property type="match status" value="1"/>
</dbReference>
<dbReference type="PROSITE" id="PS51003">
    <property type="entry name" value="CYTB_CTER"/>
    <property type="match status" value="1"/>
</dbReference>
<dbReference type="PROSITE" id="PS51002">
    <property type="entry name" value="CYTB_NTER"/>
    <property type="match status" value="1"/>
</dbReference>
<protein>
    <recommendedName>
        <fullName>Cytochrome b</fullName>
    </recommendedName>
    <alternativeName>
        <fullName>Complex III subunit 3</fullName>
    </alternativeName>
    <alternativeName>
        <fullName>Complex III subunit III</fullName>
    </alternativeName>
    <alternativeName>
        <fullName>Cytochrome b-c1 complex subunit 3</fullName>
    </alternativeName>
    <alternativeName>
        <fullName>Ubiquinol-cytochrome-c reductase complex cytochrome b subunit</fullName>
    </alternativeName>
</protein>
<proteinExistence type="inferred from homology"/>
<feature type="chain" id="PRO_0000061510" description="Cytochrome b">
    <location>
        <begin position="1"/>
        <end position="380"/>
    </location>
</feature>
<feature type="transmembrane region" description="Helical" evidence="2">
    <location>
        <begin position="33"/>
        <end position="53"/>
    </location>
</feature>
<feature type="transmembrane region" description="Helical" evidence="2">
    <location>
        <begin position="77"/>
        <end position="98"/>
    </location>
</feature>
<feature type="transmembrane region" description="Helical" evidence="2">
    <location>
        <begin position="113"/>
        <end position="133"/>
    </location>
</feature>
<feature type="transmembrane region" description="Helical" evidence="2">
    <location>
        <begin position="178"/>
        <end position="198"/>
    </location>
</feature>
<feature type="transmembrane region" description="Helical" evidence="2">
    <location>
        <begin position="226"/>
        <end position="246"/>
    </location>
</feature>
<feature type="transmembrane region" description="Helical" evidence="2">
    <location>
        <begin position="288"/>
        <end position="308"/>
    </location>
</feature>
<feature type="transmembrane region" description="Helical" evidence="2">
    <location>
        <begin position="320"/>
        <end position="340"/>
    </location>
</feature>
<feature type="transmembrane region" description="Helical" evidence="2">
    <location>
        <begin position="347"/>
        <end position="367"/>
    </location>
</feature>
<feature type="binding site" description="axial binding residue" evidence="2">
    <location>
        <position position="83"/>
    </location>
    <ligand>
        <name>heme b</name>
        <dbReference type="ChEBI" id="CHEBI:60344"/>
        <label>b562</label>
    </ligand>
    <ligandPart>
        <name>Fe</name>
        <dbReference type="ChEBI" id="CHEBI:18248"/>
    </ligandPart>
</feature>
<feature type="binding site" description="axial binding residue" evidence="2">
    <location>
        <position position="97"/>
    </location>
    <ligand>
        <name>heme b</name>
        <dbReference type="ChEBI" id="CHEBI:60344"/>
        <label>b566</label>
    </ligand>
    <ligandPart>
        <name>Fe</name>
        <dbReference type="ChEBI" id="CHEBI:18248"/>
    </ligandPart>
</feature>
<feature type="binding site" description="axial binding residue" evidence="2">
    <location>
        <position position="182"/>
    </location>
    <ligand>
        <name>heme b</name>
        <dbReference type="ChEBI" id="CHEBI:60344"/>
        <label>b562</label>
    </ligand>
    <ligandPart>
        <name>Fe</name>
        <dbReference type="ChEBI" id="CHEBI:18248"/>
    </ligandPart>
</feature>
<feature type="binding site" description="axial binding residue" evidence="2">
    <location>
        <position position="196"/>
    </location>
    <ligand>
        <name>heme b</name>
        <dbReference type="ChEBI" id="CHEBI:60344"/>
        <label>b566</label>
    </ligand>
    <ligandPart>
        <name>Fe</name>
        <dbReference type="ChEBI" id="CHEBI:18248"/>
    </ligandPart>
</feature>
<feature type="binding site" evidence="2">
    <location>
        <position position="201"/>
    </location>
    <ligand>
        <name>a ubiquinone</name>
        <dbReference type="ChEBI" id="CHEBI:16389"/>
    </ligand>
</feature>
<gene>
    <name type="primary">MT-CYB</name>
    <name type="synonym">COB</name>
    <name type="synonym">CYTB</name>
    <name type="synonym">MTCYB</name>
</gene>
<name>CYB_RUPRU</name>
<sequence>MTNIRKTHPLMKIVNNAFIDLPAPSNISSWWNFGSLLGICLILQILTGLFLAMHYTSDTATAFSSVTHICRDVNYGWIIRYMHANGASMFFICLFMHVGRGLYYGSYTFLETWNIGVILLLTTMATAFMGYVLPWGQMSFWGATVITNLLSAIPYIGTDLVEWIWGGFSVDKATLTRFFAFHFILPFIIAALALVHLLFLHETGSNNPTGIPSDADKIPFXPYYTIKDILGAMLLILTLMLLVLXTPDLLGDPDNYTPANPLNTPPHIKPEWYFLFAYAILRSIPNKLGGVLALVLSILILALVPLLHTSKQRSMMFRPISQCMFWILVADLLTLTWIGGQPVEHPYIIIGQLASIMYFFIILVMMPVASTIENNLLKWK</sequence>
<reference key="1">
    <citation type="journal article" date="1998" name="J. Mammal. Evol.">
        <title>Molecular systematics of the subfamily Caprinae (Artiodactyla, Bovidae) as determined from cytochrome b sequences.</title>
        <authorList>
            <person name="Hassanin A."/>
            <person name="Pasquet E."/>
            <person name="Vigne J.-D."/>
        </authorList>
    </citation>
    <scope>NUCLEOTIDE SEQUENCE [GENOMIC DNA]</scope>
</reference>
<evidence type="ECO:0000250" key="1"/>
<evidence type="ECO:0000250" key="2">
    <source>
        <dbReference type="UniProtKB" id="P00157"/>
    </source>
</evidence>
<evidence type="ECO:0000255" key="3">
    <source>
        <dbReference type="PROSITE-ProRule" id="PRU00967"/>
    </source>
</evidence>
<evidence type="ECO:0000255" key="4">
    <source>
        <dbReference type="PROSITE-ProRule" id="PRU00968"/>
    </source>
</evidence>
<keyword id="KW-0249">Electron transport</keyword>
<keyword id="KW-0349">Heme</keyword>
<keyword id="KW-0408">Iron</keyword>
<keyword id="KW-0472">Membrane</keyword>
<keyword id="KW-0479">Metal-binding</keyword>
<keyword id="KW-0496">Mitochondrion</keyword>
<keyword id="KW-0999">Mitochondrion inner membrane</keyword>
<keyword id="KW-0679">Respiratory chain</keyword>
<keyword id="KW-0812">Transmembrane</keyword>
<keyword id="KW-1133">Transmembrane helix</keyword>
<keyword id="KW-0813">Transport</keyword>
<keyword id="KW-0830">Ubiquinone</keyword>
<comment type="function">
    <text evidence="2">Component of the ubiquinol-cytochrome c reductase complex (complex III or cytochrome b-c1 complex) that is part of the mitochondrial respiratory chain. The b-c1 complex mediates electron transfer from ubiquinol to cytochrome c. Contributes to the generation of a proton gradient across the mitochondrial membrane that is then used for ATP synthesis.</text>
</comment>
<comment type="cofactor">
    <cofactor evidence="2">
        <name>heme b</name>
        <dbReference type="ChEBI" id="CHEBI:60344"/>
    </cofactor>
    <text evidence="2">Binds 2 heme b groups non-covalently.</text>
</comment>
<comment type="subunit">
    <text evidence="2">The cytochrome bc1 complex contains 11 subunits: 3 respiratory subunits (MT-CYB, CYC1 and UQCRFS1), 2 core proteins (UQCRC1 and UQCRC2) and 6 low-molecular weight proteins (UQCRH/QCR6, UQCRB/QCR7, UQCRQ/QCR8, UQCR10/QCR9, UQCR11/QCR10 and a cleavage product of UQCRFS1). This cytochrome bc1 complex then forms a dimer.</text>
</comment>
<comment type="subcellular location">
    <subcellularLocation>
        <location evidence="2">Mitochondrion inner membrane</location>
        <topology evidence="2">Multi-pass membrane protein</topology>
    </subcellularLocation>
</comment>
<comment type="miscellaneous">
    <text evidence="1">Heme 1 (or BL or b562) is low-potential and absorbs at about 562 nm, and heme 2 (or BH or b566) is high-potential and absorbs at about 566 nm.</text>
</comment>
<comment type="similarity">
    <text evidence="3 4">Belongs to the cytochrome b family.</text>
</comment>
<comment type="caution">
    <text evidence="2">The full-length protein contains only eight transmembrane helices, not nine as predicted by bioinformatics tools.</text>
</comment>
<geneLocation type="mitochondrion"/>
<organism>
    <name type="scientific">Rupicapra rupicapra</name>
    <name type="common">Alpine chamois</name>
    <dbReference type="NCBI Taxonomy" id="34869"/>
    <lineage>
        <taxon>Eukaryota</taxon>
        <taxon>Metazoa</taxon>
        <taxon>Chordata</taxon>
        <taxon>Craniata</taxon>
        <taxon>Vertebrata</taxon>
        <taxon>Euteleostomi</taxon>
        <taxon>Mammalia</taxon>
        <taxon>Eutheria</taxon>
        <taxon>Laurasiatheria</taxon>
        <taxon>Artiodactyla</taxon>
        <taxon>Ruminantia</taxon>
        <taxon>Pecora</taxon>
        <taxon>Bovidae</taxon>
        <taxon>Caprinae</taxon>
        <taxon>Rupicapra</taxon>
    </lineage>
</organism>